<keyword id="KW-1185">Reference proteome</keyword>
<accession>Q09529</accession>
<organism>
    <name type="scientific">Caenorhabditis elegans</name>
    <dbReference type="NCBI Taxonomy" id="6239"/>
    <lineage>
        <taxon>Eukaryota</taxon>
        <taxon>Metazoa</taxon>
        <taxon>Ecdysozoa</taxon>
        <taxon>Nematoda</taxon>
        <taxon>Chromadorea</taxon>
        <taxon>Rhabditida</taxon>
        <taxon>Rhabditina</taxon>
        <taxon>Rhabditomorpha</taxon>
        <taxon>Rhabditoidea</taxon>
        <taxon>Rhabditidae</taxon>
        <taxon>Peloderinae</taxon>
        <taxon>Caenorhabditis</taxon>
    </lineage>
</organism>
<reference key="1">
    <citation type="journal article" date="1998" name="Science">
        <title>Genome sequence of the nematode C. elegans: a platform for investigating biology.</title>
        <authorList>
            <consortium name="The C. elegans sequencing consortium"/>
        </authorList>
    </citation>
    <scope>NUCLEOTIDE SEQUENCE [LARGE SCALE GENOMIC DNA]</scope>
    <source>
        <strain>Bristol N2</strain>
    </source>
</reference>
<gene>
    <name type="ORF">EEED8.2</name>
</gene>
<feature type="chain" id="PRO_0000065270" description="Uncharacterized protein EEED8.2">
    <location>
        <begin position="1"/>
        <end position="299"/>
    </location>
</feature>
<feature type="region of interest" description="Disordered" evidence="1">
    <location>
        <begin position="1"/>
        <end position="38"/>
    </location>
</feature>
<dbReference type="EMBL" id="FO081042">
    <property type="protein sequence ID" value="CCD68729.1"/>
    <property type="molecule type" value="Genomic_DNA"/>
</dbReference>
<dbReference type="PIR" id="T15928">
    <property type="entry name" value="T15928"/>
</dbReference>
<dbReference type="RefSeq" id="NP_495026.1">
    <property type="nucleotide sequence ID" value="NM_062625.6"/>
</dbReference>
<dbReference type="SMR" id="Q09529"/>
<dbReference type="BioGRID" id="39267">
    <property type="interactions" value="2"/>
</dbReference>
<dbReference type="FunCoup" id="Q09529">
    <property type="interactions" value="107"/>
</dbReference>
<dbReference type="PaxDb" id="6239-EEED8.2"/>
<dbReference type="PeptideAtlas" id="Q09529"/>
<dbReference type="EnsemblMetazoa" id="EEED8.2.1">
    <property type="protein sequence ID" value="EEED8.2.1"/>
    <property type="gene ID" value="WBGene00017133"/>
</dbReference>
<dbReference type="GeneID" id="173923"/>
<dbReference type="KEGG" id="cel:CELE_EEED8.2"/>
<dbReference type="UCSC" id="EEED8.2">
    <property type="organism name" value="c. elegans"/>
</dbReference>
<dbReference type="AGR" id="WB:WBGene00017133"/>
<dbReference type="CTD" id="173923"/>
<dbReference type="WormBase" id="EEED8.2">
    <property type="protein sequence ID" value="CE01886"/>
    <property type="gene ID" value="WBGene00017133"/>
</dbReference>
<dbReference type="eggNOG" id="ENOG502TISX">
    <property type="taxonomic scope" value="Eukaryota"/>
</dbReference>
<dbReference type="HOGENOM" id="CLU_1035236_0_0_1"/>
<dbReference type="InParanoid" id="Q09529"/>
<dbReference type="OMA" id="NRSEREC"/>
<dbReference type="OrthoDB" id="9991853at2759"/>
<dbReference type="PRO" id="PR:Q09529"/>
<dbReference type="Proteomes" id="UP000001940">
    <property type="component" value="Chromosome II"/>
</dbReference>
<dbReference type="Bgee" id="WBGene00017133">
    <property type="expression patterns" value="Expressed in pharyngeal muscle cell (C elegans) and 3 other cell types or tissues"/>
</dbReference>
<dbReference type="GO" id="GO:0008289">
    <property type="term" value="F:lipid binding"/>
    <property type="evidence" value="ECO:0007669"/>
    <property type="project" value="InterPro"/>
</dbReference>
<dbReference type="CDD" id="cd00742">
    <property type="entry name" value="FABP"/>
    <property type="match status" value="1"/>
</dbReference>
<dbReference type="Gene3D" id="2.40.128.20">
    <property type="match status" value="1"/>
</dbReference>
<dbReference type="InterPro" id="IPR012674">
    <property type="entry name" value="Calycin"/>
</dbReference>
<dbReference type="InterPro" id="IPR000463">
    <property type="entry name" value="Fatty_acid-bd"/>
</dbReference>
<dbReference type="PRINTS" id="PR00178">
    <property type="entry name" value="FATTYACIDBP"/>
</dbReference>
<dbReference type="SUPFAM" id="SSF50814">
    <property type="entry name" value="Lipocalins"/>
    <property type="match status" value="1"/>
</dbReference>
<name>YQO2_CAEEL</name>
<comment type="similarity">
    <text evidence="2">Belongs to the calycin superfamily. Fatty-acid binding protein (FABP) family.</text>
</comment>
<evidence type="ECO:0000256" key="1">
    <source>
        <dbReference type="SAM" id="MobiDB-lite"/>
    </source>
</evidence>
<evidence type="ECO:0000305" key="2"/>
<sequence>MSLDSNSDTEFELVPKFQTQPTRGDAPKSPELEEVSTVSDLQDELKSLRLENKDLYSLMEQLKKDNDEMKKSLEKVMKNQAELGELEEIRAIEDDKRSEKLATELVAIRADCSSLNRSERECRYDIERIFAKLEEESFFSLHENPIQRTISGTWKVIKISNFDEFFAAQDISQFHALIIKNQCLYFKVNKHQVKTQSYHERSWKPRAREEIHYFNFPNSLGELYSVEKNKLILTVTQEENDKKKVISRVERSVVDGQMKEIWERNGVICERIFKKIPDQRDSRAYPRSIYGSESQNIYY</sequence>
<protein>
    <recommendedName>
        <fullName>Uncharacterized protein EEED8.2</fullName>
    </recommendedName>
</protein>
<proteinExistence type="inferred from homology"/>